<name>SMG_VIBA3</name>
<dbReference type="EMBL" id="FM954972">
    <property type="protein sequence ID" value="CAV20376.1"/>
    <property type="molecule type" value="Genomic_DNA"/>
</dbReference>
<dbReference type="SMR" id="B7VMW8"/>
<dbReference type="STRING" id="575788.VS_3123"/>
<dbReference type="KEGG" id="vsp:VS_3123"/>
<dbReference type="eggNOG" id="COG2922">
    <property type="taxonomic scope" value="Bacteria"/>
</dbReference>
<dbReference type="HOGENOM" id="CLU_133242_0_0_6"/>
<dbReference type="Proteomes" id="UP000009100">
    <property type="component" value="Chromosome 1"/>
</dbReference>
<dbReference type="HAMAP" id="MF_00598">
    <property type="entry name" value="Smg"/>
    <property type="match status" value="1"/>
</dbReference>
<dbReference type="InterPro" id="IPR007456">
    <property type="entry name" value="Smg"/>
</dbReference>
<dbReference type="NCBIfam" id="NF002897">
    <property type="entry name" value="PRK03430.1"/>
    <property type="match status" value="1"/>
</dbReference>
<dbReference type="PANTHER" id="PTHR38692">
    <property type="entry name" value="PROTEIN SMG"/>
    <property type="match status" value="1"/>
</dbReference>
<dbReference type="PANTHER" id="PTHR38692:SF1">
    <property type="entry name" value="PROTEIN SMG"/>
    <property type="match status" value="1"/>
</dbReference>
<dbReference type="Pfam" id="PF04361">
    <property type="entry name" value="DUF494"/>
    <property type="match status" value="1"/>
</dbReference>
<gene>
    <name evidence="1" type="primary">smg</name>
    <name type="ordered locus">VS_3123</name>
</gene>
<accession>B7VMW8</accession>
<comment type="similarity">
    <text evidence="1">Belongs to the Smg family.</text>
</comment>
<evidence type="ECO:0000255" key="1">
    <source>
        <dbReference type="HAMAP-Rule" id="MF_00598"/>
    </source>
</evidence>
<protein>
    <recommendedName>
        <fullName evidence="1">Protein Smg homolog</fullName>
    </recommendedName>
</protein>
<reference key="1">
    <citation type="submission" date="2009-02" db="EMBL/GenBank/DDBJ databases">
        <title>Vibrio splendidus str. LGP32 complete genome.</title>
        <authorList>
            <person name="Mazel D."/>
            <person name="Le Roux F."/>
        </authorList>
    </citation>
    <scope>NUCLEOTIDE SEQUENCE [LARGE SCALE GENOMIC DNA]</scope>
    <source>
        <strain>LGP32</strain>
    </source>
</reference>
<sequence>MMMDILMYLFETYIHSDSELQVDQDELEDELLRAGFHQDDIYKALHWLEDLAALQDTENQAAITMCSNTSMRIYTSREISRINMECRGFLLFLEQINVLTTEIREMVIDRVMGLETSEFELDDLKWIILMVLFNVPGNESAYTQMEELLYTKEQGILH</sequence>
<organism>
    <name type="scientific">Vibrio atlanticus (strain LGP32)</name>
    <name type="common">Vibrio splendidus (strain Mel32)</name>
    <dbReference type="NCBI Taxonomy" id="575788"/>
    <lineage>
        <taxon>Bacteria</taxon>
        <taxon>Pseudomonadati</taxon>
        <taxon>Pseudomonadota</taxon>
        <taxon>Gammaproteobacteria</taxon>
        <taxon>Vibrionales</taxon>
        <taxon>Vibrionaceae</taxon>
        <taxon>Vibrio</taxon>
    </lineage>
</organism>
<feature type="chain" id="PRO_1000147002" description="Protein Smg homolog">
    <location>
        <begin position="1"/>
        <end position="158"/>
    </location>
</feature>
<proteinExistence type="inferred from homology"/>